<accession>B3PUN2</accession>
<gene>
    <name evidence="1" type="primary">rpoZ</name>
    <name type="ordered locus">RHECIAT_CH0001452</name>
</gene>
<keyword id="KW-0240">DNA-directed RNA polymerase</keyword>
<keyword id="KW-0548">Nucleotidyltransferase</keyword>
<keyword id="KW-0804">Transcription</keyword>
<keyword id="KW-0808">Transferase</keyword>
<dbReference type="EC" id="2.7.7.6" evidence="1"/>
<dbReference type="EMBL" id="CP001074">
    <property type="protein sequence ID" value="ACE90431.1"/>
    <property type="molecule type" value="Genomic_DNA"/>
</dbReference>
<dbReference type="SMR" id="B3PUN2"/>
<dbReference type="KEGG" id="rec:RHECIAT_CH0001452"/>
<dbReference type="eggNOG" id="COG1758">
    <property type="taxonomic scope" value="Bacteria"/>
</dbReference>
<dbReference type="HOGENOM" id="CLU_125406_2_0_5"/>
<dbReference type="Proteomes" id="UP000008817">
    <property type="component" value="Chromosome"/>
</dbReference>
<dbReference type="GO" id="GO:0000428">
    <property type="term" value="C:DNA-directed RNA polymerase complex"/>
    <property type="evidence" value="ECO:0007669"/>
    <property type="project" value="UniProtKB-KW"/>
</dbReference>
<dbReference type="GO" id="GO:0003677">
    <property type="term" value="F:DNA binding"/>
    <property type="evidence" value="ECO:0007669"/>
    <property type="project" value="UniProtKB-UniRule"/>
</dbReference>
<dbReference type="GO" id="GO:0003899">
    <property type="term" value="F:DNA-directed RNA polymerase activity"/>
    <property type="evidence" value="ECO:0007669"/>
    <property type="project" value="UniProtKB-UniRule"/>
</dbReference>
<dbReference type="GO" id="GO:0006351">
    <property type="term" value="P:DNA-templated transcription"/>
    <property type="evidence" value="ECO:0007669"/>
    <property type="project" value="UniProtKB-UniRule"/>
</dbReference>
<dbReference type="Gene3D" id="3.90.940.10">
    <property type="match status" value="1"/>
</dbReference>
<dbReference type="HAMAP" id="MF_00366">
    <property type="entry name" value="RNApol_bact_RpoZ"/>
    <property type="match status" value="1"/>
</dbReference>
<dbReference type="InterPro" id="IPR003716">
    <property type="entry name" value="DNA-dir_RNA_pol_omega"/>
</dbReference>
<dbReference type="InterPro" id="IPR006110">
    <property type="entry name" value="Pol_omega/Rpo6/RPB6"/>
</dbReference>
<dbReference type="InterPro" id="IPR036161">
    <property type="entry name" value="RPB6/omega-like_sf"/>
</dbReference>
<dbReference type="NCBIfam" id="TIGR00690">
    <property type="entry name" value="rpoZ"/>
    <property type="match status" value="1"/>
</dbReference>
<dbReference type="PANTHER" id="PTHR34476">
    <property type="entry name" value="DNA-DIRECTED RNA POLYMERASE SUBUNIT OMEGA"/>
    <property type="match status" value="1"/>
</dbReference>
<dbReference type="PANTHER" id="PTHR34476:SF1">
    <property type="entry name" value="DNA-DIRECTED RNA POLYMERASE SUBUNIT OMEGA"/>
    <property type="match status" value="1"/>
</dbReference>
<dbReference type="Pfam" id="PF01192">
    <property type="entry name" value="RNA_pol_Rpb6"/>
    <property type="match status" value="1"/>
</dbReference>
<dbReference type="SMART" id="SM01409">
    <property type="entry name" value="RNA_pol_Rpb6"/>
    <property type="match status" value="1"/>
</dbReference>
<dbReference type="SUPFAM" id="SSF63562">
    <property type="entry name" value="RPB6/omega subunit-like"/>
    <property type="match status" value="1"/>
</dbReference>
<comment type="function">
    <text evidence="1">Promotes RNA polymerase assembly. Latches the N- and C-terminal regions of the beta' subunit thereby facilitating its interaction with the beta and alpha subunits.</text>
</comment>
<comment type="catalytic activity">
    <reaction evidence="1">
        <text>RNA(n) + a ribonucleoside 5'-triphosphate = RNA(n+1) + diphosphate</text>
        <dbReference type="Rhea" id="RHEA:21248"/>
        <dbReference type="Rhea" id="RHEA-COMP:14527"/>
        <dbReference type="Rhea" id="RHEA-COMP:17342"/>
        <dbReference type="ChEBI" id="CHEBI:33019"/>
        <dbReference type="ChEBI" id="CHEBI:61557"/>
        <dbReference type="ChEBI" id="CHEBI:140395"/>
        <dbReference type="EC" id="2.7.7.6"/>
    </reaction>
</comment>
<comment type="subunit">
    <text evidence="1">The RNAP catalytic core consists of 2 alpha, 1 beta, 1 beta' and 1 omega subunit. When a sigma factor is associated with the core the holoenzyme is formed, which can initiate transcription.</text>
</comment>
<comment type="similarity">
    <text evidence="1">Belongs to the RNA polymerase subunit omega family.</text>
</comment>
<protein>
    <recommendedName>
        <fullName evidence="1">DNA-directed RNA polymerase subunit omega</fullName>
        <shortName evidence="1">RNAP omega subunit</shortName>
        <ecNumber evidence="1">2.7.7.6</ecNumber>
    </recommendedName>
    <alternativeName>
        <fullName evidence="1">RNA polymerase omega subunit</fullName>
    </alternativeName>
    <alternativeName>
        <fullName evidence="1">Transcriptase subunit omega</fullName>
    </alternativeName>
</protein>
<organism>
    <name type="scientific">Rhizobium etli (strain CIAT 652)</name>
    <dbReference type="NCBI Taxonomy" id="491916"/>
    <lineage>
        <taxon>Bacteria</taxon>
        <taxon>Pseudomonadati</taxon>
        <taxon>Pseudomonadota</taxon>
        <taxon>Alphaproteobacteria</taxon>
        <taxon>Hyphomicrobiales</taxon>
        <taxon>Rhizobiaceae</taxon>
        <taxon>Rhizobium/Agrobacterium group</taxon>
        <taxon>Rhizobium</taxon>
    </lineage>
</organism>
<reference key="1">
    <citation type="journal article" date="2010" name="Appl. Environ. Microbiol.">
        <title>Conserved symbiotic plasmid DNA sequences in the multireplicon pangenomic structure of Rhizobium etli.</title>
        <authorList>
            <person name="Gonzalez V."/>
            <person name="Acosta J.L."/>
            <person name="Santamaria R.I."/>
            <person name="Bustos P."/>
            <person name="Fernandez J.L."/>
            <person name="Hernandez Gonzalez I.L."/>
            <person name="Diaz R."/>
            <person name="Flores M."/>
            <person name="Palacios R."/>
            <person name="Mora J."/>
            <person name="Davila G."/>
        </authorList>
    </citation>
    <scope>NUCLEOTIDE SEQUENCE [LARGE SCALE GENOMIC DNA]</scope>
    <source>
        <strain>CIAT 652</strain>
    </source>
</reference>
<evidence type="ECO:0000255" key="1">
    <source>
        <dbReference type="HAMAP-Rule" id="MF_00366"/>
    </source>
</evidence>
<name>RPOZ_RHIE6</name>
<proteinExistence type="inferred from homology"/>
<sequence length="134" mass="14724">MARVTVEDCIDKVENRFELVLLASHRARLISQGASITIDRDNDKNPVVALREIADETLSPDDLKEDLIHSLQKHVEVDEPEPDPASMIAAGGVAAADSEEQDDLPETITFDQMSEEELLAGIEGLVPPEKSDDY</sequence>
<feature type="chain" id="PRO_1000121260" description="DNA-directed RNA polymerase subunit omega">
    <location>
        <begin position="1"/>
        <end position="134"/>
    </location>
</feature>